<organism>
    <name type="scientific">Androctonus amoreuxi</name>
    <name type="common">African fattail scorpion</name>
    <name type="synonym">Scorpio amoreuxi</name>
    <dbReference type="NCBI Taxonomy" id="112024"/>
    <lineage>
        <taxon>Eukaryota</taxon>
        <taxon>Metazoa</taxon>
        <taxon>Ecdysozoa</taxon>
        <taxon>Arthropoda</taxon>
        <taxon>Chelicerata</taxon>
        <taxon>Arachnida</taxon>
        <taxon>Scorpiones</taxon>
        <taxon>Buthida</taxon>
        <taxon>Buthoidea</taxon>
        <taxon>Buthidae</taxon>
        <taxon>Androctonus</taxon>
    </lineage>
</organism>
<keyword id="KW-0027">Amidation</keyword>
<keyword id="KW-0044">Antibiotic</keyword>
<keyword id="KW-0929">Antimicrobial</keyword>
<keyword id="KW-0165">Cleavage on pair of basic residues</keyword>
<keyword id="KW-0204">Cytolysis</keyword>
<keyword id="KW-0903">Direct protein sequencing</keyword>
<keyword id="KW-0354">Hemolysis</keyword>
<keyword id="KW-0472">Membrane</keyword>
<keyword id="KW-0964">Secreted</keyword>
<keyword id="KW-0732">Signal</keyword>
<keyword id="KW-1052">Target cell membrane</keyword>
<keyword id="KW-1053">Target membrane</keyword>
<keyword id="KW-0812">Transmembrane</keyword>
<reference key="1">
    <citation type="journal article" date="2012" name="Peptides">
        <title>Antimicrobial/cytolytic peptides from the venom of the North African scorpion, Androctonus amoreuxi: biochemical and functional characterization of natural peptides and a single site-substituted analog.</title>
        <authorList>
            <person name="Almaaytah A."/>
            <person name="Zhou M."/>
            <person name="Wang L."/>
            <person name="Chen T."/>
            <person name="Walker B."/>
            <person name="Shaw C."/>
        </authorList>
    </citation>
    <scope>NUCLEOTIDE SEQUENCE [MRNA]</scope>
    <scope>PROTEIN SEQUENCE OF 23-40</scope>
    <scope>FUNCTION</scope>
    <scope>AMIDATION AT LYS-40</scope>
    <scope>SYNTHESIS OF 23-40</scope>
    <scope>MUTAGENESIS OF HIS-30</scope>
    <scope>MASS SPECTROMETRY</scope>
    <source>
        <tissue>Venom</tissue>
        <tissue>Venom gland</tissue>
    </source>
</reference>
<reference key="2">
    <citation type="journal article" date="2014" name="Peptides">
        <title>Scorpion venom peptides with no disulfide bridges: a review.</title>
        <authorList>
            <person name="Almaaytah A."/>
            <person name="Albalas Q."/>
        </authorList>
    </citation>
    <scope>NOMENCLATURE</scope>
</reference>
<comment type="function">
    <text evidence="2">Has antibacterial activity against the Gram-positive bacteria S.aureus (MIC=20 uM), the Gram-negative bacteria E.coli (MIC=150 uM), and the yeast C.albicans (MIC=64 uM). Causes hemolysis on horse erythrocytes.</text>
</comment>
<comment type="subcellular location">
    <subcellularLocation>
        <location>Secreted</location>
    </subcellularLocation>
    <subcellularLocation>
        <location>Target cell membrane</location>
    </subcellularLocation>
    <text>Forms a helical membrane channel in the prey.</text>
</comment>
<comment type="tissue specificity">
    <text>Expressed by the venom gland.</text>
</comment>
<comment type="mass spectrometry"/>
<comment type="similarity">
    <text evidence="5">Belongs to the non-disulfide-bridged peptide (NDBP) superfamily. Short antimicrobial peptide (group 4) family.</text>
</comment>
<sequence>MEIKYLLTVFLVLLIGSDYCQAFLFSLIPHAIGGLISAFKGRRKRDLDGQIDRSRNFRKRDAELEELLSKLPIY</sequence>
<protein>
    <recommendedName>
        <fullName evidence="3">Antimicrobial peptide 1</fullName>
        <shortName evidence="3">AamAP1</shortName>
    </recommendedName>
    <alternativeName>
        <fullName evidence="4">Non-disulfide-bridged peptide 4.11</fullName>
        <shortName evidence="4">NDBP-4.11</shortName>
    </alternativeName>
</protein>
<dbReference type="EMBL" id="FR821613">
    <property type="protein sequence ID" value="CBZ41126.1"/>
    <property type="molecule type" value="mRNA"/>
</dbReference>
<dbReference type="GO" id="GO:0005576">
    <property type="term" value="C:extracellular region"/>
    <property type="evidence" value="ECO:0007669"/>
    <property type="project" value="UniProtKB-SubCell"/>
</dbReference>
<dbReference type="GO" id="GO:0016020">
    <property type="term" value="C:membrane"/>
    <property type="evidence" value="ECO:0007669"/>
    <property type="project" value="UniProtKB-KW"/>
</dbReference>
<dbReference type="GO" id="GO:0044218">
    <property type="term" value="C:other organism cell membrane"/>
    <property type="evidence" value="ECO:0007669"/>
    <property type="project" value="UniProtKB-KW"/>
</dbReference>
<dbReference type="GO" id="GO:0042742">
    <property type="term" value="P:defense response to bacterium"/>
    <property type="evidence" value="ECO:0007669"/>
    <property type="project" value="UniProtKB-KW"/>
</dbReference>
<dbReference type="GO" id="GO:0031640">
    <property type="term" value="P:killing of cells of another organism"/>
    <property type="evidence" value="ECO:0007669"/>
    <property type="project" value="UniProtKB-KW"/>
</dbReference>
<accession>G8YYA5</accession>
<proteinExistence type="evidence at protein level"/>
<name>NDB4B_ANDAM</name>
<evidence type="ECO:0000250" key="1"/>
<evidence type="ECO:0000269" key="2">
    <source>
    </source>
</evidence>
<evidence type="ECO:0000303" key="3">
    <source>
    </source>
</evidence>
<evidence type="ECO:0000303" key="4">
    <source>
    </source>
</evidence>
<evidence type="ECO:0000305" key="5"/>
<feature type="signal peptide" evidence="2">
    <location>
        <begin position="1"/>
        <end position="22"/>
    </location>
</feature>
<feature type="peptide" id="PRO_5000827072" description="Antimicrobial peptide 1">
    <location>
        <begin position="23"/>
        <end position="40"/>
    </location>
</feature>
<feature type="propeptide" id="PRO_5000827071" evidence="1">
    <location>
        <begin position="46"/>
        <end position="74"/>
    </location>
</feature>
<feature type="modified residue" description="Lysine amide" evidence="2">
    <location>
        <position position="40"/>
    </location>
</feature>
<feature type="mutagenesis site" description="Important increase in potency against both bacteria and yeast (MIC=3-5 mM)." evidence="2">
    <original>H</original>
    <variation>K</variation>
    <location>
        <position position="30"/>
    </location>
</feature>